<accession>C6BYQ4</accession>
<evidence type="ECO:0000255" key="1">
    <source>
        <dbReference type="HAMAP-Rule" id="MF_00093"/>
    </source>
</evidence>
<gene>
    <name evidence="1" type="primary">prfA</name>
    <name type="ordered locus">Desal_2606</name>
</gene>
<comment type="function">
    <text evidence="1">Peptide chain release factor 1 directs the termination of translation in response to the peptide chain termination codons UAG and UAA.</text>
</comment>
<comment type="subcellular location">
    <subcellularLocation>
        <location evidence="1">Cytoplasm</location>
    </subcellularLocation>
</comment>
<comment type="PTM">
    <text evidence="1">Methylated by PrmC. Methylation increases the termination efficiency of RF1.</text>
</comment>
<comment type="similarity">
    <text evidence="1">Belongs to the prokaryotic/mitochondrial release factor family.</text>
</comment>
<protein>
    <recommendedName>
        <fullName evidence="1">Peptide chain release factor 1</fullName>
        <shortName evidence="1">RF-1</shortName>
    </recommendedName>
</protein>
<feature type="chain" id="PRO_1000202689" description="Peptide chain release factor 1">
    <location>
        <begin position="1"/>
        <end position="357"/>
    </location>
</feature>
<feature type="modified residue" description="N5-methylglutamine" evidence="1">
    <location>
        <position position="232"/>
    </location>
</feature>
<organism>
    <name type="scientific">Maridesulfovibrio salexigens (strain ATCC 14822 / DSM 2638 / NCIMB 8403 / VKM B-1763)</name>
    <name type="common">Desulfovibrio salexigens</name>
    <dbReference type="NCBI Taxonomy" id="526222"/>
    <lineage>
        <taxon>Bacteria</taxon>
        <taxon>Pseudomonadati</taxon>
        <taxon>Thermodesulfobacteriota</taxon>
        <taxon>Desulfovibrionia</taxon>
        <taxon>Desulfovibrionales</taxon>
        <taxon>Desulfovibrionaceae</taxon>
        <taxon>Maridesulfovibrio</taxon>
    </lineage>
</organism>
<name>RF1_MARSD</name>
<keyword id="KW-0963">Cytoplasm</keyword>
<keyword id="KW-0488">Methylation</keyword>
<keyword id="KW-0648">Protein biosynthesis</keyword>
<keyword id="KW-1185">Reference proteome</keyword>
<sequence length="357" mass="40235">MFAKLEDIERSFMDLEQELADPEVYNNQERYRKVTMAHAELGDVVAAFREYKQLSADLEDNKEMAKDSDPEIREMAEMEIAEIKDRLPKLEEELKLLLLPKDPMDGKNIILEIRAGTGGEEAALFAADLFRMYSRFAESNGWKVEVMNSNPTGTGGFKEIIAAISGSRIYSMMKYESGTHRVQRVPATETQGRIHTSAATVAIMPEAEEVDVQVRNEDLRIDVFRASGPGGQSVNTTDSAIRITHLPTGLVVICQDEKSQHKNKAKAMKVLCSRLLQAEQDKQHAEMAEQRRAQVGSGDRSERIRTYNFPQGRVTDHRINLTLYKLDAVIEGDMQELVESLISHYQSEALKQQAQDG</sequence>
<dbReference type="EMBL" id="CP001649">
    <property type="protein sequence ID" value="ACS80661.1"/>
    <property type="molecule type" value="Genomic_DNA"/>
</dbReference>
<dbReference type="RefSeq" id="WP_015852477.1">
    <property type="nucleotide sequence ID" value="NC_012881.1"/>
</dbReference>
<dbReference type="SMR" id="C6BYQ4"/>
<dbReference type="STRING" id="526222.Desal_2606"/>
<dbReference type="KEGG" id="dsa:Desal_2606"/>
<dbReference type="eggNOG" id="COG0216">
    <property type="taxonomic scope" value="Bacteria"/>
</dbReference>
<dbReference type="HOGENOM" id="CLU_036856_0_1_7"/>
<dbReference type="OrthoDB" id="9806673at2"/>
<dbReference type="Proteomes" id="UP000002601">
    <property type="component" value="Chromosome"/>
</dbReference>
<dbReference type="GO" id="GO:0005737">
    <property type="term" value="C:cytoplasm"/>
    <property type="evidence" value="ECO:0007669"/>
    <property type="project" value="UniProtKB-SubCell"/>
</dbReference>
<dbReference type="GO" id="GO:0016149">
    <property type="term" value="F:translation release factor activity, codon specific"/>
    <property type="evidence" value="ECO:0007669"/>
    <property type="project" value="UniProtKB-UniRule"/>
</dbReference>
<dbReference type="FunFam" id="3.30.160.20:FF:000004">
    <property type="entry name" value="Peptide chain release factor 1"/>
    <property type="match status" value="1"/>
</dbReference>
<dbReference type="FunFam" id="3.30.70.1660:FF:000002">
    <property type="entry name" value="Peptide chain release factor 1"/>
    <property type="match status" value="1"/>
</dbReference>
<dbReference type="FunFam" id="3.30.70.1660:FF:000004">
    <property type="entry name" value="Peptide chain release factor 1"/>
    <property type="match status" value="1"/>
</dbReference>
<dbReference type="Gene3D" id="3.30.160.20">
    <property type="match status" value="1"/>
</dbReference>
<dbReference type="Gene3D" id="3.30.70.1660">
    <property type="match status" value="1"/>
</dbReference>
<dbReference type="Gene3D" id="6.10.140.1950">
    <property type="match status" value="1"/>
</dbReference>
<dbReference type="HAMAP" id="MF_00093">
    <property type="entry name" value="Rel_fac_1"/>
    <property type="match status" value="1"/>
</dbReference>
<dbReference type="InterPro" id="IPR005139">
    <property type="entry name" value="PCRF"/>
</dbReference>
<dbReference type="InterPro" id="IPR000352">
    <property type="entry name" value="Pep_chain_release_fac_I"/>
</dbReference>
<dbReference type="InterPro" id="IPR045853">
    <property type="entry name" value="Pep_chain_release_fac_I_sf"/>
</dbReference>
<dbReference type="InterPro" id="IPR050057">
    <property type="entry name" value="Prokaryotic/Mito_RF"/>
</dbReference>
<dbReference type="InterPro" id="IPR004373">
    <property type="entry name" value="RF-1"/>
</dbReference>
<dbReference type="NCBIfam" id="TIGR00019">
    <property type="entry name" value="prfA"/>
    <property type="match status" value="1"/>
</dbReference>
<dbReference type="NCBIfam" id="NF001859">
    <property type="entry name" value="PRK00591.1"/>
    <property type="match status" value="1"/>
</dbReference>
<dbReference type="PANTHER" id="PTHR43804">
    <property type="entry name" value="LD18447P"/>
    <property type="match status" value="1"/>
</dbReference>
<dbReference type="PANTHER" id="PTHR43804:SF7">
    <property type="entry name" value="LD18447P"/>
    <property type="match status" value="1"/>
</dbReference>
<dbReference type="Pfam" id="PF03462">
    <property type="entry name" value="PCRF"/>
    <property type="match status" value="1"/>
</dbReference>
<dbReference type="Pfam" id="PF00472">
    <property type="entry name" value="RF-1"/>
    <property type="match status" value="1"/>
</dbReference>
<dbReference type="SMART" id="SM00937">
    <property type="entry name" value="PCRF"/>
    <property type="match status" value="1"/>
</dbReference>
<dbReference type="SUPFAM" id="SSF75620">
    <property type="entry name" value="Release factor"/>
    <property type="match status" value="1"/>
</dbReference>
<dbReference type="PROSITE" id="PS00745">
    <property type="entry name" value="RF_PROK_I"/>
    <property type="match status" value="1"/>
</dbReference>
<reference key="1">
    <citation type="submission" date="2009-06" db="EMBL/GenBank/DDBJ databases">
        <title>Complete sequence of Desulfovibrio salexigens DSM 2638.</title>
        <authorList>
            <consortium name="US DOE Joint Genome Institute"/>
            <person name="Lucas S."/>
            <person name="Copeland A."/>
            <person name="Lapidus A."/>
            <person name="Glavina del Rio T."/>
            <person name="Tice H."/>
            <person name="Bruce D."/>
            <person name="Goodwin L."/>
            <person name="Pitluck S."/>
            <person name="Munk A.C."/>
            <person name="Brettin T."/>
            <person name="Detter J.C."/>
            <person name="Han C."/>
            <person name="Tapia R."/>
            <person name="Larimer F."/>
            <person name="Land M."/>
            <person name="Hauser L."/>
            <person name="Kyrpides N."/>
            <person name="Anderson I."/>
            <person name="Wall J.D."/>
            <person name="Arkin A.P."/>
            <person name="Dehal P."/>
            <person name="Chivian D."/>
            <person name="Giles B."/>
            <person name="Hazen T.C."/>
        </authorList>
    </citation>
    <scope>NUCLEOTIDE SEQUENCE [LARGE SCALE GENOMIC DNA]</scope>
    <source>
        <strain>ATCC 14822 / DSM 2638 / NCIMB 8403 / VKM B-1763</strain>
    </source>
</reference>
<proteinExistence type="inferred from homology"/>